<sequence length="311" mass="35189">MFKKWLQPSNEELIKAIYVKNEAEAQKLIAKMDILELSKIYIDNTALIWAVDKGLEKVCEMLIPKMSEQAINHVTNNGNTALTLAASKGLEKICELLIPKMSPQAINHVTDNGNTALTWAAWKDLEKICEMLIPKMSPQAINQVTNNGNTALILAAWKGLEKICKILIPKMFEQAINQVTNKGCTALTLAADKDLKKIYELLINKMSIDAINHTLTSSHKEVKKFIQEKISYNNILAEKLALFLKESFLGKGKDNINNFVKMISAAKFYKIVNKKLLTEYLQKQEVDNSKFIIEEMNNFIKTHSFTIARIC</sequence>
<gene>
    <name type="ordered locus">RF_0923</name>
</gene>
<reference key="1">
    <citation type="journal article" date="2005" name="PLoS Biol.">
        <title>The genome sequence of Rickettsia felis identifies the first putative conjugative plasmid in an obligate intracellular parasite.</title>
        <authorList>
            <person name="Ogata H."/>
            <person name="Renesto P."/>
            <person name="Audic S."/>
            <person name="Robert C."/>
            <person name="Blanc G."/>
            <person name="Fournier P.-E."/>
            <person name="Parinello H."/>
            <person name="Claverie J.-M."/>
            <person name="Raoult D."/>
        </authorList>
    </citation>
    <scope>NUCLEOTIDE SEQUENCE [LARGE SCALE GENOMIC DNA]</scope>
    <source>
        <strain>ATCC VR-1525 / URRWXCal2</strain>
    </source>
</reference>
<accession>Q4UKZ9</accession>
<keyword id="KW-0040">ANK repeat</keyword>
<keyword id="KW-0677">Repeat</keyword>
<proteinExistence type="predicted"/>
<protein>
    <recommendedName>
        <fullName>Putative ankyrin repeat protein RF_0923</fullName>
    </recommendedName>
</protein>
<organism>
    <name type="scientific">Rickettsia felis (strain ATCC VR-1525 / URRWXCal2)</name>
    <name type="common">Rickettsia azadi</name>
    <dbReference type="NCBI Taxonomy" id="315456"/>
    <lineage>
        <taxon>Bacteria</taxon>
        <taxon>Pseudomonadati</taxon>
        <taxon>Pseudomonadota</taxon>
        <taxon>Alphaproteobacteria</taxon>
        <taxon>Rickettsiales</taxon>
        <taxon>Rickettsiaceae</taxon>
        <taxon>Rickettsieae</taxon>
        <taxon>Rickettsia</taxon>
        <taxon>spotted fever group</taxon>
    </lineage>
</organism>
<feature type="chain" id="PRO_0000281754" description="Putative ankyrin repeat protein RF_0923">
    <location>
        <begin position="1"/>
        <end position="311"/>
    </location>
</feature>
<feature type="repeat" description="ANK 1">
    <location>
        <begin position="42"/>
        <end position="71"/>
    </location>
</feature>
<feature type="repeat" description="ANK 2">
    <location>
        <begin position="77"/>
        <end position="106"/>
    </location>
</feature>
<feature type="repeat" description="ANK 3">
    <location>
        <begin position="112"/>
        <end position="141"/>
    </location>
</feature>
<feature type="repeat" description="ANK 4">
    <location>
        <begin position="147"/>
        <end position="176"/>
    </location>
</feature>
<feature type="repeat" description="ANK 5">
    <location>
        <begin position="182"/>
        <end position="213"/>
    </location>
</feature>
<dbReference type="EMBL" id="CP000053">
    <property type="protein sequence ID" value="AAY61774.1"/>
    <property type="molecule type" value="Genomic_DNA"/>
</dbReference>
<dbReference type="SMR" id="Q4UKZ9"/>
<dbReference type="STRING" id="315456.RF_0923"/>
<dbReference type="KEGG" id="rfe:RF_0923"/>
<dbReference type="eggNOG" id="COG0666">
    <property type="taxonomic scope" value="Bacteria"/>
</dbReference>
<dbReference type="HOGENOM" id="CLU_731338_0_0_5"/>
<dbReference type="Proteomes" id="UP000008548">
    <property type="component" value="Chromosome"/>
</dbReference>
<dbReference type="GO" id="GO:0005737">
    <property type="term" value="C:cytoplasm"/>
    <property type="evidence" value="ECO:0007669"/>
    <property type="project" value="TreeGrafter"/>
</dbReference>
<dbReference type="Gene3D" id="1.25.40.20">
    <property type="entry name" value="Ankyrin repeat-containing domain"/>
    <property type="match status" value="2"/>
</dbReference>
<dbReference type="InterPro" id="IPR002110">
    <property type="entry name" value="Ankyrin_rpt"/>
</dbReference>
<dbReference type="InterPro" id="IPR036770">
    <property type="entry name" value="Ankyrin_rpt-contain_sf"/>
</dbReference>
<dbReference type="PANTHER" id="PTHR24198">
    <property type="entry name" value="ANKYRIN REPEAT AND PROTEIN KINASE DOMAIN-CONTAINING PROTEIN"/>
    <property type="match status" value="1"/>
</dbReference>
<dbReference type="PANTHER" id="PTHR24198:SF165">
    <property type="entry name" value="ANKYRIN REPEAT-CONTAINING PROTEIN-RELATED"/>
    <property type="match status" value="1"/>
</dbReference>
<dbReference type="Pfam" id="PF12796">
    <property type="entry name" value="Ank_2"/>
    <property type="match status" value="2"/>
</dbReference>
<dbReference type="SMART" id="SM00248">
    <property type="entry name" value="ANK"/>
    <property type="match status" value="5"/>
</dbReference>
<dbReference type="SUPFAM" id="SSF48403">
    <property type="entry name" value="Ankyrin repeat"/>
    <property type="match status" value="1"/>
</dbReference>
<dbReference type="PROSITE" id="PS50297">
    <property type="entry name" value="ANK_REP_REGION"/>
    <property type="match status" value="1"/>
</dbReference>
<name>Y923_RICFE</name>